<gene>
    <name evidence="7 9" type="primary">ntc</name>
    <name type="ORF">CG10855</name>
</gene>
<organism>
    <name type="scientific">Drosophila melanogaster</name>
    <name type="common">Fruit fly</name>
    <dbReference type="NCBI Taxonomy" id="7227"/>
    <lineage>
        <taxon>Eukaryota</taxon>
        <taxon>Metazoa</taxon>
        <taxon>Ecdysozoa</taxon>
        <taxon>Arthropoda</taxon>
        <taxon>Hexapoda</taxon>
        <taxon>Insecta</taxon>
        <taxon>Pterygota</taxon>
        <taxon>Neoptera</taxon>
        <taxon>Endopterygota</taxon>
        <taxon>Diptera</taxon>
        <taxon>Brachycera</taxon>
        <taxon>Muscomorpha</taxon>
        <taxon>Ephydroidea</taxon>
        <taxon>Drosophilidae</taxon>
        <taxon>Drosophila</taxon>
        <taxon>Sophophora</taxon>
    </lineage>
</organism>
<sequence length="314" mass="36487">MSDTKSEIEGFIAIPTTSGEQQQQQPQQQQNEQQVVGTKDIKAPDQVGKKQRPRLIQEKSTQETNPLILEHATLEWVPQHMDKLLNQYQECRKMPAAEWLHLLTYLVALECGFVEEETFAQKRHLIQPVPSFSSFHAQNVRILSEQPARYEVCFNDTVYIMRLRTLLDKHAPEETSLVAALQCRLMAVSLGDQLMITLSPAPPSKEPGYSVSLSIGRYVLNIQAKNKPIYHRFRKLDELSYQLKQHLFQPMRSQQLMQMEMKLQPSLLGLPDELYFEIFRYLDKSQLNVVARVNRHLHFYSKEVERKRLKGGRS</sequence>
<dbReference type="EMBL" id="AE014296">
    <property type="protein sequence ID" value="AAF47792.2"/>
    <property type="molecule type" value="Genomic_DNA"/>
</dbReference>
<dbReference type="EMBL" id="AY094784">
    <property type="protein sequence ID" value="AAM11137.1"/>
    <property type="molecule type" value="mRNA"/>
</dbReference>
<dbReference type="RefSeq" id="NP_647829.1">
    <property type="nucleotide sequence ID" value="NM_139572.3"/>
</dbReference>
<dbReference type="SMR" id="Q8SX86"/>
<dbReference type="BioGRID" id="63933">
    <property type="interactions" value="8"/>
</dbReference>
<dbReference type="DIP" id="DIP-18929N"/>
<dbReference type="FunCoup" id="Q8SX86">
    <property type="interactions" value="10"/>
</dbReference>
<dbReference type="IntAct" id="Q8SX86">
    <property type="interactions" value="6"/>
</dbReference>
<dbReference type="STRING" id="7227.FBpp0073041"/>
<dbReference type="PaxDb" id="7227-FBpp0073041"/>
<dbReference type="EnsemblMetazoa" id="FBtr0073185">
    <property type="protein sequence ID" value="FBpp0073041"/>
    <property type="gene ID" value="FBgn0035461"/>
</dbReference>
<dbReference type="GeneID" id="38443"/>
<dbReference type="KEGG" id="dme:Dmel_CG10855"/>
<dbReference type="UCSC" id="CG10855-RA">
    <property type="organism name" value="d. melanogaster"/>
</dbReference>
<dbReference type="AGR" id="FB:FBgn0035461"/>
<dbReference type="CTD" id="38443"/>
<dbReference type="FlyBase" id="FBgn0035461">
    <property type="gene designation" value="ntc"/>
</dbReference>
<dbReference type="VEuPathDB" id="VectorBase:FBgn0035461"/>
<dbReference type="eggNOG" id="ENOG502T9P0">
    <property type="taxonomic scope" value="Eukaryota"/>
</dbReference>
<dbReference type="HOGENOM" id="CLU_076982_0_0_1"/>
<dbReference type="InParanoid" id="Q8SX86"/>
<dbReference type="OMA" id="KMPAAEW"/>
<dbReference type="OrthoDB" id="101791at2759"/>
<dbReference type="PhylomeDB" id="Q8SX86"/>
<dbReference type="SignaLink" id="Q8SX86"/>
<dbReference type="BioGRID-ORCS" id="38443">
    <property type="hits" value="0 hits in 1 CRISPR screen"/>
</dbReference>
<dbReference type="GenomeRNAi" id="38443"/>
<dbReference type="PRO" id="PR:Q8SX86"/>
<dbReference type="Proteomes" id="UP000000803">
    <property type="component" value="Chromosome 3L"/>
</dbReference>
<dbReference type="Bgee" id="FBgn0035461">
    <property type="expression patterns" value="Expressed in early-mid elongation-stage spermatid (Drosophila) in testis and 57 other cell types or tissues"/>
</dbReference>
<dbReference type="GO" id="GO:0005737">
    <property type="term" value="C:cytoplasm"/>
    <property type="evidence" value="ECO:0007669"/>
    <property type="project" value="UniProtKB-SubCell"/>
</dbReference>
<dbReference type="GO" id="GO:0019005">
    <property type="term" value="C:SCF ubiquitin ligase complex"/>
    <property type="evidence" value="ECO:0000314"/>
    <property type="project" value="FlyBase"/>
</dbReference>
<dbReference type="GO" id="GO:0008656">
    <property type="term" value="F:cysteine-type endopeptidase activator activity involved in apoptotic process"/>
    <property type="evidence" value="ECO:0000315"/>
    <property type="project" value="FlyBase"/>
</dbReference>
<dbReference type="GO" id="GO:1990756">
    <property type="term" value="F:ubiquitin-like ligase-substrate adaptor activity"/>
    <property type="evidence" value="ECO:0000304"/>
    <property type="project" value="FlyBase"/>
</dbReference>
<dbReference type="GO" id="GO:1901526">
    <property type="term" value="P:positive regulation of mitophagy"/>
    <property type="evidence" value="ECO:0000315"/>
    <property type="project" value="FlyBase"/>
</dbReference>
<dbReference type="GO" id="GO:0050821">
    <property type="term" value="P:protein stabilization"/>
    <property type="evidence" value="ECO:0000315"/>
    <property type="project" value="FlyBase"/>
</dbReference>
<dbReference type="GO" id="GO:0016567">
    <property type="term" value="P:protein ubiquitination"/>
    <property type="evidence" value="ECO:0000315"/>
    <property type="project" value="FlyBase"/>
</dbReference>
<dbReference type="GO" id="GO:0031146">
    <property type="term" value="P:SCF-dependent proteasomal ubiquitin-dependent protein catabolic process"/>
    <property type="evidence" value="ECO:0000255"/>
    <property type="project" value="FlyBase"/>
</dbReference>
<dbReference type="GO" id="GO:0007291">
    <property type="term" value="P:sperm individualization"/>
    <property type="evidence" value="ECO:0000315"/>
    <property type="project" value="FlyBase"/>
</dbReference>
<dbReference type="Gene3D" id="3.40.1000.30">
    <property type="match status" value="1"/>
</dbReference>
<dbReference type="InterPro" id="IPR036047">
    <property type="entry name" value="F-box-like_dom_sf"/>
</dbReference>
<dbReference type="InterPro" id="IPR001810">
    <property type="entry name" value="F-box_dom"/>
</dbReference>
<dbReference type="Pfam" id="PF00646">
    <property type="entry name" value="F-box"/>
    <property type="match status" value="1"/>
</dbReference>
<dbReference type="SUPFAM" id="SSF81383">
    <property type="entry name" value="F-box domain"/>
    <property type="match status" value="1"/>
</dbReference>
<dbReference type="PROSITE" id="PS50181">
    <property type="entry name" value="FBOX"/>
    <property type="match status" value="1"/>
</dbReference>
<name>NUTC_DROME</name>
<accession>Q8SX86</accession>
<accession>Q9VZM8</accession>
<proteinExistence type="evidence at protein level"/>
<protein>
    <recommendedName>
        <fullName evidence="7">Protein nutcracker</fullName>
    </recommendedName>
</protein>
<keyword id="KW-0963">Cytoplasm</keyword>
<keyword id="KW-1185">Reference proteome</keyword>
<feature type="chain" id="PRO_0000424890" description="Protein nutcracker">
    <location>
        <begin position="1"/>
        <end position="314"/>
    </location>
</feature>
<feature type="domain" description="F-box" evidence="1">
    <location>
        <begin position="264"/>
        <end position="309"/>
    </location>
</feature>
<feature type="region of interest" description="Disordered" evidence="2">
    <location>
        <begin position="1"/>
        <end position="62"/>
    </location>
</feature>
<feature type="region of interest" description="Required for interaction with skpA and Cul1, but not with PI31" evidence="4 5">
    <location>
        <begin position="257"/>
        <end position="314"/>
    </location>
</feature>
<feature type="compositionally biased region" description="Low complexity" evidence="2">
    <location>
        <begin position="21"/>
        <end position="34"/>
    </location>
</feature>
<feature type="mutagenesis site" description="Reduces interaction with PI31." evidence="5">
    <original>V</original>
    <variation>E</variation>
    <location>
        <position position="188"/>
    </location>
</feature>
<comment type="function">
    <text evidence="4 5">Functions together with PI31 to control non-apoptotic caspase activation during sperm individualization. Positively regulates PI31 stability.</text>
</comment>
<comment type="subunit">
    <text evidence="4 5">Component of an SCF (SKP1-CUL1-F-box protein) E3 ubiquitin-protein ligase complex, at least composed of ntc, skpA and Cul1. Interacts (via F-box domain) with skpA and Cul1. Interacts with Prosalpha7 and PI31. Interacts with Bruce.</text>
</comment>
<comment type="interaction">
    <interactant intactId="EBI-137714">
        <id>Q8SX86</id>
    </interactant>
    <interactant intactId="EBI-144377">
        <id>Q9V637</id>
        <label>PI31</label>
    </interactant>
    <organismsDiffer>false</organismsDiffer>
    <experiments>6</experiments>
</comment>
<comment type="interaction">
    <interactant intactId="EBI-137714">
        <id>Q8SX86</id>
    </interactant>
    <interactant intactId="EBI-180180">
        <id>O77430</id>
        <label>SkpA</label>
    </interactant>
    <organismsDiffer>false</organismsDiffer>
    <experiments>3</experiments>
</comment>
<comment type="interaction">
    <interactant intactId="EBI-137714">
        <id>Q8SX86</id>
    </interactant>
    <interactant intactId="EBI-133084">
        <id>Q7KJ69</id>
        <label>SkpB</label>
    </interactant>
    <organismsDiffer>false</organismsDiffer>
    <experiments>3</experiments>
</comment>
<comment type="subcellular location">
    <subcellularLocation>
        <location evidence="4 5">Cytoplasm</location>
    </subcellularLocation>
    <text evidence="4 5">In the spermatid, colocalizes with Cul1 at the actin-based individualization complex and the cystic bulge.</text>
</comment>
<comment type="tissue specificity">
    <text evidence="4 5">Expressed in testis (at protein level).</text>
</comment>
<comment type="disruption phenotype">
    <text evidence="4">Male sterility.</text>
</comment>
<evidence type="ECO:0000255" key="1">
    <source>
        <dbReference type="PROSITE-ProRule" id="PRU00080"/>
    </source>
</evidence>
<evidence type="ECO:0000256" key="2">
    <source>
        <dbReference type="SAM" id="MobiDB-lite"/>
    </source>
</evidence>
<evidence type="ECO:0000269" key="3">
    <source>
    </source>
</evidence>
<evidence type="ECO:0000269" key="4">
    <source>
    </source>
</evidence>
<evidence type="ECO:0000269" key="5">
    <source>
    </source>
</evidence>
<evidence type="ECO:0000305" key="6"/>
<evidence type="ECO:0000312" key="7">
    <source>
        <dbReference type="EMBL" id="AAF47792.2"/>
    </source>
</evidence>
<evidence type="ECO:0000312" key="8">
    <source>
        <dbReference type="EMBL" id="AAM11137.1"/>
    </source>
</evidence>
<evidence type="ECO:0000312" key="9">
    <source>
        <dbReference type="FlyBase" id="FBgn0035461"/>
    </source>
</evidence>
<reference evidence="7" key="1">
    <citation type="journal article" date="2000" name="Science">
        <title>The genome sequence of Drosophila melanogaster.</title>
        <authorList>
            <person name="Adams M.D."/>
            <person name="Celniker S.E."/>
            <person name="Holt R.A."/>
            <person name="Evans C.A."/>
            <person name="Gocayne J.D."/>
            <person name="Amanatides P.G."/>
            <person name="Scherer S.E."/>
            <person name="Li P.W."/>
            <person name="Hoskins R.A."/>
            <person name="Galle R.F."/>
            <person name="George R.A."/>
            <person name="Lewis S.E."/>
            <person name="Richards S."/>
            <person name="Ashburner M."/>
            <person name="Henderson S.N."/>
            <person name="Sutton G.G."/>
            <person name="Wortman J.R."/>
            <person name="Yandell M.D."/>
            <person name="Zhang Q."/>
            <person name="Chen L.X."/>
            <person name="Brandon R.C."/>
            <person name="Rogers Y.-H.C."/>
            <person name="Blazej R.G."/>
            <person name="Champe M."/>
            <person name="Pfeiffer B.D."/>
            <person name="Wan K.H."/>
            <person name="Doyle C."/>
            <person name="Baxter E.G."/>
            <person name="Helt G."/>
            <person name="Nelson C.R."/>
            <person name="Miklos G.L.G."/>
            <person name="Abril J.F."/>
            <person name="Agbayani A."/>
            <person name="An H.-J."/>
            <person name="Andrews-Pfannkoch C."/>
            <person name="Baldwin D."/>
            <person name="Ballew R.M."/>
            <person name="Basu A."/>
            <person name="Baxendale J."/>
            <person name="Bayraktaroglu L."/>
            <person name="Beasley E.M."/>
            <person name="Beeson K.Y."/>
            <person name="Benos P.V."/>
            <person name="Berman B.P."/>
            <person name="Bhandari D."/>
            <person name="Bolshakov S."/>
            <person name="Borkova D."/>
            <person name="Botchan M.R."/>
            <person name="Bouck J."/>
            <person name="Brokstein P."/>
            <person name="Brottier P."/>
            <person name="Burtis K.C."/>
            <person name="Busam D.A."/>
            <person name="Butler H."/>
            <person name="Cadieu E."/>
            <person name="Center A."/>
            <person name="Chandra I."/>
            <person name="Cherry J.M."/>
            <person name="Cawley S."/>
            <person name="Dahlke C."/>
            <person name="Davenport L.B."/>
            <person name="Davies P."/>
            <person name="de Pablos B."/>
            <person name="Delcher A."/>
            <person name="Deng Z."/>
            <person name="Mays A.D."/>
            <person name="Dew I."/>
            <person name="Dietz S.M."/>
            <person name="Dodson K."/>
            <person name="Doup L.E."/>
            <person name="Downes M."/>
            <person name="Dugan-Rocha S."/>
            <person name="Dunkov B.C."/>
            <person name="Dunn P."/>
            <person name="Durbin K.J."/>
            <person name="Evangelista C.C."/>
            <person name="Ferraz C."/>
            <person name="Ferriera S."/>
            <person name="Fleischmann W."/>
            <person name="Fosler C."/>
            <person name="Gabrielian A.E."/>
            <person name="Garg N.S."/>
            <person name="Gelbart W.M."/>
            <person name="Glasser K."/>
            <person name="Glodek A."/>
            <person name="Gong F."/>
            <person name="Gorrell J.H."/>
            <person name="Gu Z."/>
            <person name="Guan P."/>
            <person name="Harris M."/>
            <person name="Harris N.L."/>
            <person name="Harvey D.A."/>
            <person name="Heiman T.J."/>
            <person name="Hernandez J.R."/>
            <person name="Houck J."/>
            <person name="Hostin D."/>
            <person name="Houston K.A."/>
            <person name="Howland T.J."/>
            <person name="Wei M.-H."/>
            <person name="Ibegwam C."/>
            <person name="Jalali M."/>
            <person name="Kalush F."/>
            <person name="Karpen G.H."/>
            <person name="Ke Z."/>
            <person name="Kennison J.A."/>
            <person name="Ketchum K.A."/>
            <person name="Kimmel B.E."/>
            <person name="Kodira C.D."/>
            <person name="Kraft C.L."/>
            <person name="Kravitz S."/>
            <person name="Kulp D."/>
            <person name="Lai Z."/>
            <person name="Lasko P."/>
            <person name="Lei Y."/>
            <person name="Levitsky A.A."/>
            <person name="Li J.H."/>
            <person name="Li Z."/>
            <person name="Liang Y."/>
            <person name="Lin X."/>
            <person name="Liu X."/>
            <person name="Mattei B."/>
            <person name="McIntosh T.C."/>
            <person name="McLeod M.P."/>
            <person name="McPherson D."/>
            <person name="Merkulov G."/>
            <person name="Milshina N.V."/>
            <person name="Mobarry C."/>
            <person name="Morris J."/>
            <person name="Moshrefi A."/>
            <person name="Mount S.M."/>
            <person name="Moy M."/>
            <person name="Murphy B."/>
            <person name="Murphy L."/>
            <person name="Muzny D.M."/>
            <person name="Nelson D.L."/>
            <person name="Nelson D.R."/>
            <person name="Nelson K.A."/>
            <person name="Nixon K."/>
            <person name="Nusskern D.R."/>
            <person name="Pacleb J.M."/>
            <person name="Palazzolo M."/>
            <person name="Pittman G.S."/>
            <person name="Pan S."/>
            <person name="Pollard J."/>
            <person name="Puri V."/>
            <person name="Reese M.G."/>
            <person name="Reinert K."/>
            <person name="Remington K."/>
            <person name="Saunders R.D.C."/>
            <person name="Scheeler F."/>
            <person name="Shen H."/>
            <person name="Shue B.C."/>
            <person name="Siden-Kiamos I."/>
            <person name="Simpson M."/>
            <person name="Skupski M.P."/>
            <person name="Smith T.J."/>
            <person name="Spier E."/>
            <person name="Spradling A.C."/>
            <person name="Stapleton M."/>
            <person name="Strong R."/>
            <person name="Sun E."/>
            <person name="Svirskas R."/>
            <person name="Tector C."/>
            <person name="Turner R."/>
            <person name="Venter E."/>
            <person name="Wang A.H."/>
            <person name="Wang X."/>
            <person name="Wang Z.-Y."/>
            <person name="Wassarman D.A."/>
            <person name="Weinstock G.M."/>
            <person name="Weissenbach J."/>
            <person name="Williams S.M."/>
            <person name="Woodage T."/>
            <person name="Worley K.C."/>
            <person name="Wu D."/>
            <person name="Yang S."/>
            <person name="Yao Q.A."/>
            <person name="Ye J."/>
            <person name="Yeh R.-F."/>
            <person name="Zaveri J.S."/>
            <person name="Zhan M."/>
            <person name="Zhang G."/>
            <person name="Zhao Q."/>
            <person name="Zheng L."/>
            <person name="Zheng X.H."/>
            <person name="Zhong F.N."/>
            <person name="Zhong W."/>
            <person name="Zhou X."/>
            <person name="Zhu S.C."/>
            <person name="Zhu X."/>
            <person name="Smith H.O."/>
            <person name="Gibbs R.A."/>
            <person name="Myers E.W."/>
            <person name="Rubin G.M."/>
            <person name="Venter J.C."/>
        </authorList>
    </citation>
    <scope>NUCLEOTIDE SEQUENCE [LARGE SCALE GENOMIC DNA]</scope>
    <source>
        <strain>Berkeley</strain>
    </source>
</reference>
<reference evidence="7" key="2">
    <citation type="journal article" date="2002" name="Genome Biol.">
        <title>Annotation of the Drosophila melanogaster euchromatic genome: a systematic review.</title>
        <authorList>
            <person name="Misra S."/>
            <person name="Crosby M.A."/>
            <person name="Mungall C.J."/>
            <person name="Matthews B.B."/>
            <person name="Campbell K.S."/>
            <person name="Hradecky P."/>
            <person name="Huang Y."/>
            <person name="Kaminker J.S."/>
            <person name="Millburn G.H."/>
            <person name="Prochnik S.E."/>
            <person name="Smith C.D."/>
            <person name="Tupy J.L."/>
            <person name="Whitfield E.J."/>
            <person name="Bayraktaroglu L."/>
            <person name="Berman B.P."/>
            <person name="Bettencourt B.R."/>
            <person name="Celniker S.E."/>
            <person name="de Grey A.D.N.J."/>
            <person name="Drysdale R.A."/>
            <person name="Harris N.L."/>
            <person name="Richter J."/>
            <person name="Russo S."/>
            <person name="Schroeder A.J."/>
            <person name="Shu S.Q."/>
            <person name="Stapleton M."/>
            <person name="Yamada C."/>
            <person name="Ashburner M."/>
            <person name="Gelbart W.M."/>
            <person name="Rubin G.M."/>
            <person name="Lewis S.E."/>
        </authorList>
    </citation>
    <scope>GENOME REANNOTATION</scope>
    <source>
        <strain>Berkeley</strain>
    </source>
</reference>
<reference evidence="8" key="3">
    <citation type="journal article" date="2002" name="Genome Biol.">
        <title>A Drosophila full-length cDNA resource.</title>
        <authorList>
            <person name="Stapleton M."/>
            <person name="Carlson J.W."/>
            <person name="Brokstein P."/>
            <person name="Yu C."/>
            <person name="Champe M."/>
            <person name="George R.A."/>
            <person name="Guarin H."/>
            <person name="Kronmiller B."/>
            <person name="Pacleb J.M."/>
            <person name="Park S."/>
            <person name="Wan K.H."/>
            <person name="Rubin G.M."/>
            <person name="Celniker S.E."/>
        </authorList>
    </citation>
    <scope>NUCLEOTIDE SEQUENCE [LARGE SCALE MRNA]</scope>
    <source>
        <strain evidence="8">Berkeley</strain>
        <tissue evidence="3">Embryo</tissue>
    </source>
</reference>
<reference evidence="6" key="4">
    <citation type="journal article" date="2010" name="Development">
        <title>A novel F-box protein is required for caspase activation during cellular remodeling in Drosophila.</title>
        <authorList>
            <person name="Bader M."/>
            <person name="Arama E."/>
            <person name="Steller H."/>
        </authorList>
    </citation>
    <scope>FUNCTION</scope>
    <scope>IDENTIFICATION IN A COMPLEX WITH SKPA AND CUL1</scope>
    <scope>INTERACTION WITH BRUCE</scope>
    <scope>SUBCELLULAR LOCATION</scope>
    <scope>TISSUE SPECIFICITY</scope>
    <scope>DISRUPTION PHENOTYPE</scope>
</reference>
<reference evidence="6" key="5">
    <citation type="journal article" date="2011" name="Cell">
        <title>A conserved F box regulatory complex controls proteasome activity in Drosophila.</title>
        <authorList>
            <person name="Bader M."/>
            <person name="Benjamin S."/>
            <person name="Wapinski O.L."/>
            <person name="Smith D.M."/>
            <person name="Goldberg A.L."/>
            <person name="Steller H."/>
        </authorList>
    </citation>
    <scope>FUNCTION</scope>
    <scope>INTERACTION WITH PROSALPHA7 AND PI31</scope>
    <scope>SUBCELLULAR LOCATION</scope>
    <scope>TISSUE SPECIFICITY</scope>
    <scope>MUTAGENESIS OF VAL-188</scope>
</reference>